<evidence type="ECO:0000255" key="1">
    <source>
        <dbReference type="PROSITE-ProRule" id="PRU00251"/>
    </source>
</evidence>
<evidence type="ECO:0000256" key="2">
    <source>
        <dbReference type="SAM" id="MobiDB-lite"/>
    </source>
</evidence>
<evidence type="ECO:0000269" key="3">
    <source>
    </source>
</evidence>
<evidence type="ECO:0000269" key="4">
    <source>
    </source>
</evidence>
<evidence type="ECO:0000303" key="5">
    <source>
    </source>
</evidence>
<evidence type="ECO:0000305" key="6"/>
<evidence type="ECO:0000312" key="7">
    <source>
        <dbReference type="Araport" id="AT2G03060"/>
    </source>
</evidence>
<feature type="chain" id="PRO_0000433966" description="Agamous-like MADS-box protein AGL30">
    <location>
        <begin position="1"/>
        <end position="386"/>
    </location>
</feature>
<feature type="domain" description="MADS-box" evidence="1">
    <location>
        <begin position="1"/>
        <end position="53"/>
    </location>
</feature>
<feature type="region of interest" description="Disordered" evidence="2">
    <location>
        <begin position="341"/>
        <end position="360"/>
    </location>
</feature>
<feature type="compositionally biased region" description="Polar residues" evidence="2">
    <location>
        <begin position="344"/>
        <end position="356"/>
    </location>
</feature>
<keyword id="KW-0025">Alternative splicing</keyword>
<keyword id="KW-0238">DNA-binding</keyword>
<keyword id="KW-0539">Nucleus</keyword>
<keyword id="KW-1185">Reference proteome</keyword>
<keyword id="KW-0804">Transcription</keyword>
<keyword id="KW-0805">Transcription regulation</keyword>
<dbReference type="EMBL" id="AC004138">
    <property type="protein sequence ID" value="AAC32924.2"/>
    <property type="status" value="ALT_SEQ"/>
    <property type="molecule type" value="Genomic_DNA"/>
</dbReference>
<dbReference type="EMBL" id="CP002685">
    <property type="protein sequence ID" value="AEC05661.1"/>
    <property type="molecule type" value="Genomic_DNA"/>
</dbReference>
<dbReference type="EMBL" id="DQ446459">
    <property type="protein sequence ID" value="ABE65796.1"/>
    <property type="molecule type" value="mRNA"/>
</dbReference>
<dbReference type="EMBL" id="DQ652954">
    <property type="protein sequence ID" value="ABK28481.1"/>
    <property type="status" value="ALT_SEQ"/>
    <property type="molecule type" value="mRNA"/>
</dbReference>
<dbReference type="PIR" id="H84443">
    <property type="entry name" value="H84443"/>
</dbReference>
<dbReference type="RefSeq" id="NP_001318187.1">
    <molecule id="Q1PFA4-1"/>
    <property type="nucleotide sequence ID" value="NM_001335152.1"/>
</dbReference>
<dbReference type="SMR" id="Q1PFA4"/>
<dbReference type="FunCoup" id="Q1PFA4">
    <property type="interactions" value="97"/>
</dbReference>
<dbReference type="IntAct" id="Q1PFA4">
    <property type="interactions" value="1"/>
</dbReference>
<dbReference type="STRING" id="3702.Q1PFA4"/>
<dbReference type="PaxDb" id="3702-AT2G03060.2"/>
<dbReference type="ProteomicsDB" id="244757">
    <molecule id="Q1PFA4-1"/>
</dbReference>
<dbReference type="EnsemblPlants" id="AT2G03060.2">
    <molecule id="Q1PFA4-1"/>
    <property type="protein sequence ID" value="AT2G03060.2"/>
    <property type="gene ID" value="AT2G03060"/>
</dbReference>
<dbReference type="GeneID" id="814835"/>
<dbReference type="Gramene" id="AT2G03060.2">
    <molecule id="Q1PFA4-1"/>
    <property type="protein sequence ID" value="AT2G03060.2"/>
    <property type="gene ID" value="AT2G03060"/>
</dbReference>
<dbReference type="KEGG" id="ath:AT2G03060"/>
<dbReference type="Araport" id="AT2G03060"/>
<dbReference type="TAIR" id="AT2G03060">
    <property type="gene designation" value="AGL30"/>
</dbReference>
<dbReference type="eggNOG" id="KOG0014">
    <property type="taxonomic scope" value="Eukaryota"/>
</dbReference>
<dbReference type="HOGENOM" id="CLU_034796_0_0_1"/>
<dbReference type="InParanoid" id="Q1PFA4"/>
<dbReference type="PhylomeDB" id="Q1PFA4"/>
<dbReference type="PRO" id="PR:Q1PFA4"/>
<dbReference type="Proteomes" id="UP000006548">
    <property type="component" value="Chromosome 2"/>
</dbReference>
<dbReference type="ExpressionAtlas" id="Q1PFA4">
    <property type="expression patterns" value="baseline and differential"/>
</dbReference>
<dbReference type="GO" id="GO:0005634">
    <property type="term" value="C:nucleus"/>
    <property type="evidence" value="ECO:0007669"/>
    <property type="project" value="UniProtKB-SubCell"/>
</dbReference>
<dbReference type="GO" id="GO:0000987">
    <property type="term" value="F:cis-regulatory region sequence-specific DNA binding"/>
    <property type="evidence" value="ECO:0007669"/>
    <property type="project" value="InterPro"/>
</dbReference>
<dbReference type="GO" id="GO:0003700">
    <property type="term" value="F:DNA-binding transcription factor activity"/>
    <property type="evidence" value="ECO:0000250"/>
    <property type="project" value="TAIR"/>
</dbReference>
<dbReference type="GO" id="GO:0000981">
    <property type="term" value="F:DNA-binding transcription factor activity, RNA polymerase II-specific"/>
    <property type="evidence" value="ECO:0007669"/>
    <property type="project" value="InterPro"/>
</dbReference>
<dbReference type="GO" id="GO:0046983">
    <property type="term" value="F:protein dimerization activity"/>
    <property type="evidence" value="ECO:0007669"/>
    <property type="project" value="InterPro"/>
</dbReference>
<dbReference type="GO" id="GO:0009555">
    <property type="term" value="P:pollen development"/>
    <property type="evidence" value="ECO:0000316"/>
    <property type="project" value="TAIR"/>
</dbReference>
<dbReference type="GO" id="GO:0010152">
    <property type="term" value="P:pollen maturation"/>
    <property type="evidence" value="ECO:0000315"/>
    <property type="project" value="UniProtKB"/>
</dbReference>
<dbReference type="GO" id="GO:0045944">
    <property type="term" value="P:positive regulation of transcription by RNA polymerase II"/>
    <property type="evidence" value="ECO:0007669"/>
    <property type="project" value="InterPro"/>
</dbReference>
<dbReference type="GO" id="GO:0080092">
    <property type="term" value="P:regulation of pollen tube growth"/>
    <property type="evidence" value="ECO:0000315"/>
    <property type="project" value="UniProtKB"/>
</dbReference>
<dbReference type="CDD" id="cd00266">
    <property type="entry name" value="MADS_SRF_like"/>
    <property type="match status" value="1"/>
</dbReference>
<dbReference type="FunFam" id="3.40.1810.10:FF:000010">
    <property type="entry name" value="Agamous-like MADS-box protein AGL30"/>
    <property type="match status" value="1"/>
</dbReference>
<dbReference type="Gene3D" id="3.40.1810.10">
    <property type="entry name" value="Transcription factor, MADS-box"/>
    <property type="match status" value="1"/>
</dbReference>
<dbReference type="InterPro" id="IPR050142">
    <property type="entry name" value="MADS-box/MEF2_TF"/>
</dbReference>
<dbReference type="InterPro" id="IPR033897">
    <property type="entry name" value="SRF-like_MADS-box"/>
</dbReference>
<dbReference type="InterPro" id="IPR002100">
    <property type="entry name" value="TF_MADSbox"/>
</dbReference>
<dbReference type="InterPro" id="IPR036879">
    <property type="entry name" value="TF_MADSbox_sf"/>
</dbReference>
<dbReference type="PANTHER" id="PTHR48019">
    <property type="entry name" value="SERUM RESPONSE FACTOR HOMOLOG"/>
    <property type="match status" value="1"/>
</dbReference>
<dbReference type="Pfam" id="PF00319">
    <property type="entry name" value="SRF-TF"/>
    <property type="match status" value="1"/>
</dbReference>
<dbReference type="PRINTS" id="PR00404">
    <property type="entry name" value="MADSDOMAIN"/>
</dbReference>
<dbReference type="SMART" id="SM00432">
    <property type="entry name" value="MADS"/>
    <property type="match status" value="1"/>
</dbReference>
<dbReference type="SUPFAM" id="SSF55455">
    <property type="entry name" value="SRF-like"/>
    <property type="match status" value="1"/>
</dbReference>
<dbReference type="PROSITE" id="PS50066">
    <property type="entry name" value="MADS_BOX_2"/>
    <property type="match status" value="1"/>
</dbReference>
<protein>
    <recommendedName>
        <fullName evidence="6">Agamous-like MADS-box protein AGL30</fullName>
    </recommendedName>
</protein>
<gene>
    <name evidence="5" type="primary">AGL30</name>
    <name evidence="7" type="ordered locus">At2g03060</name>
</gene>
<accession>Q1PFA4</accession>
<accession>A0MEI3</accession>
<accession>O80619</accession>
<comment type="function">
    <text evidence="4">Probable transcription factor that forms heterodimers with the MADS-box proteins AGL66 and AGL104 and is involved in the regulation of pollen maturation at the late stages of pollen development and pollen tube growth.</text>
</comment>
<comment type="subunit">
    <text evidence="4">Forms heterodimers with AGL66 and AGL104.</text>
</comment>
<comment type="subcellular location">
    <subcellularLocation>
        <location evidence="1">Nucleus</location>
    </subcellularLocation>
</comment>
<comment type="alternative products">
    <event type="alternative splicing"/>
    <isoform>
        <id>Q1PFA4-1</id>
        <name>1</name>
        <sequence type="displayed"/>
    </isoform>
    <text evidence="6">A number of isoforms are produced. According to EST sequences.</text>
</comment>
<comment type="tissue specificity">
    <text evidence="3">Expressed in pollen.</text>
</comment>
<comment type="sequence caution" evidence="6">
    <conflict type="erroneous gene model prediction">
        <sequence resource="EMBL-CDS" id="AAC32924"/>
    </conflict>
</comment>
<comment type="sequence caution" evidence="6">
    <conflict type="erroneous termination">
        <sequence resource="EMBL-CDS" id="ABK28481"/>
    </conflict>
    <text>Extended C-terminus.</text>
</comment>
<reference key="1">
    <citation type="journal article" date="1999" name="Nature">
        <title>Sequence and analysis of chromosome 2 of the plant Arabidopsis thaliana.</title>
        <authorList>
            <person name="Lin X."/>
            <person name="Kaul S."/>
            <person name="Rounsley S.D."/>
            <person name="Shea T.P."/>
            <person name="Benito M.-I."/>
            <person name="Town C.D."/>
            <person name="Fujii C.Y."/>
            <person name="Mason T.M."/>
            <person name="Bowman C.L."/>
            <person name="Barnstead M.E."/>
            <person name="Feldblyum T.V."/>
            <person name="Buell C.R."/>
            <person name="Ketchum K.A."/>
            <person name="Lee J.J."/>
            <person name="Ronning C.M."/>
            <person name="Koo H.L."/>
            <person name="Moffat K.S."/>
            <person name="Cronin L.A."/>
            <person name="Shen M."/>
            <person name="Pai G."/>
            <person name="Van Aken S."/>
            <person name="Umayam L."/>
            <person name="Tallon L.J."/>
            <person name="Gill J.E."/>
            <person name="Adams M.D."/>
            <person name="Carrera A.J."/>
            <person name="Creasy T.H."/>
            <person name="Goodman H.M."/>
            <person name="Somerville C.R."/>
            <person name="Copenhaver G.P."/>
            <person name="Preuss D."/>
            <person name="Nierman W.C."/>
            <person name="White O."/>
            <person name="Eisen J.A."/>
            <person name="Salzberg S.L."/>
            <person name="Fraser C.M."/>
            <person name="Venter J.C."/>
        </authorList>
    </citation>
    <scope>NUCLEOTIDE SEQUENCE [LARGE SCALE GENOMIC DNA]</scope>
    <source>
        <strain>cv. Columbia</strain>
    </source>
</reference>
<reference key="2">
    <citation type="journal article" date="2017" name="Plant J.">
        <title>Araport11: a complete reannotation of the Arabidopsis thaliana reference genome.</title>
        <authorList>
            <person name="Cheng C.Y."/>
            <person name="Krishnakumar V."/>
            <person name="Chan A.P."/>
            <person name="Thibaud-Nissen F."/>
            <person name="Schobel S."/>
            <person name="Town C.D."/>
        </authorList>
    </citation>
    <scope>GENOME REANNOTATION</scope>
    <source>
        <strain>cv. Columbia</strain>
    </source>
</reference>
<reference key="3">
    <citation type="journal article" date="2006" name="Plant Biotechnol. J.">
        <title>Simultaneous high-throughput recombinational cloning of open reading frames in closed and open configurations.</title>
        <authorList>
            <person name="Underwood B.A."/>
            <person name="Vanderhaeghen R."/>
            <person name="Whitford R."/>
            <person name="Town C.D."/>
            <person name="Hilson P."/>
        </authorList>
    </citation>
    <scope>NUCLEOTIDE SEQUENCE [LARGE SCALE MRNA]</scope>
    <source>
        <strain>cv. Columbia</strain>
    </source>
</reference>
<reference key="4">
    <citation type="journal article" date="2003" name="Mol. Biol. Evol.">
        <title>Evolution and divergence of the MADS-box gene family based on genome-wide expression analyses.</title>
        <authorList>
            <person name="Kofuji R."/>
            <person name="Sumikawa N."/>
            <person name="Yamasaki M."/>
            <person name="Kondo K."/>
            <person name="Ueda K."/>
            <person name="Ito M."/>
            <person name="Hasebe M."/>
        </authorList>
    </citation>
    <scope>TISSUE SPECIFICITY</scope>
</reference>
<reference key="5">
    <citation type="journal article" date="2003" name="Plant Cell">
        <title>Molecular and phylogenetic analyses of the complete MADS-box transcription factor family in Arabidopsis: new openings to the MADS world.</title>
        <authorList>
            <person name="Parenicova L."/>
            <person name="de Folter S."/>
            <person name="Kieffer M."/>
            <person name="Horner D.S."/>
            <person name="Favalli C."/>
            <person name="Busscher J."/>
            <person name="Cook H.E."/>
            <person name="Ingram R.M."/>
            <person name="Kater M.M."/>
            <person name="Davies B."/>
            <person name="Angenent G.C."/>
            <person name="Colombo L."/>
        </authorList>
    </citation>
    <scope>GENE FAMILY</scope>
    <scope>NOMENCLATURE</scope>
</reference>
<reference key="6">
    <citation type="journal article" date="2009" name="Plant Physiol.">
        <title>MIKC* MADS domain heterodimers are required for pollen maturation and tube growth in Arabidopsis.</title>
        <authorList>
            <person name="Adamczyk B.J."/>
            <person name="Fernandez D.E."/>
        </authorList>
    </citation>
    <scope>FUNCTION</scope>
    <scope>INTERACTION WITH AGL66 AND AGL104</scope>
</reference>
<organism>
    <name type="scientific">Arabidopsis thaliana</name>
    <name type="common">Mouse-ear cress</name>
    <dbReference type="NCBI Taxonomy" id="3702"/>
    <lineage>
        <taxon>Eukaryota</taxon>
        <taxon>Viridiplantae</taxon>
        <taxon>Streptophyta</taxon>
        <taxon>Embryophyta</taxon>
        <taxon>Tracheophyta</taxon>
        <taxon>Spermatophyta</taxon>
        <taxon>Magnoliopsida</taxon>
        <taxon>eudicotyledons</taxon>
        <taxon>Gunneridae</taxon>
        <taxon>Pentapetalae</taxon>
        <taxon>rosids</taxon>
        <taxon>malvids</taxon>
        <taxon>Brassicales</taxon>
        <taxon>Brassicaceae</taxon>
        <taxon>Camelineae</taxon>
        <taxon>Arabidopsis</taxon>
    </lineage>
</organism>
<proteinExistence type="evidence at protein level"/>
<name>AGL30_ARATH</name>
<sequence length="386" mass="43789">MGRVKLKIKKLENTNGRQSTFAKRKNGILKKANELSILCDIDIVLLMFSPTGKAAICCGTRSSMEEVIAKFSQVTPQERTKRKFESLENLKKTFQKLDHDVNIREFIASSNSTVEDLSTQARILQARISEIHGRLSYWTEPDKINNVEHLGQLEISIRQSLDQLRAHKEHFGQQQQAMQIENANFVKDWSTCSMQDGIQIPLEQQLQSMSWILNSNTTNIVTEEHNSIPQREVECSASSSFGSYPGYFGTGKSPEMTIPGQETSFLDELNTGQLKQDTSSQQQFTNNNNITAYNPNLHNDMNHHQTLPPPPLPLTLPHAQVYIPMNQREYHMNGFFEAPPPDSSAYNDNTNQTRFGSSSSSLPCSISMFDEYLFSQVTKTKLSQRF</sequence>